<feature type="chain" id="PRO_0000178661" description="Reduced folate transporter">
    <location>
        <begin position="1"/>
        <end position="512"/>
    </location>
</feature>
<feature type="topological domain" description="Cytoplasmic" evidence="1">
    <location>
        <begin position="1"/>
        <end position="29"/>
    </location>
</feature>
<feature type="transmembrane region" description="Helical; Name=1" evidence="1">
    <location>
        <begin position="30"/>
        <end position="50"/>
    </location>
</feature>
<feature type="topological domain" description="Extracellular" evidence="1">
    <location>
        <begin position="51"/>
        <end position="62"/>
    </location>
</feature>
<feature type="transmembrane region" description="Helical; Name=2" evidence="1">
    <location>
        <begin position="63"/>
        <end position="85"/>
    </location>
</feature>
<feature type="topological domain" description="Cytoplasmic" evidence="1">
    <location>
        <begin position="86"/>
        <end position="89"/>
    </location>
</feature>
<feature type="transmembrane region" description="Helical; Name=3" evidence="1">
    <location>
        <begin position="90"/>
        <end position="110"/>
    </location>
</feature>
<feature type="topological domain" description="Extracellular" evidence="1">
    <location>
        <begin position="111"/>
        <end position="114"/>
    </location>
</feature>
<feature type="transmembrane region" description="Helical; Name=4" evidence="1">
    <location>
        <begin position="115"/>
        <end position="137"/>
    </location>
</feature>
<feature type="topological domain" description="Cytoplasmic" evidence="1">
    <location>
        <begin position="138"/>
        <end position="151"/>
    </location>
</feature>
<feature type="transmembrane region" description="Helical; Name=5" evidence="1">
    <location>
        <begin position="152"/>
        <end position="176"/>
    </location>
</feature>
<feature type="topological domain" description="Extracellular" evidence="1">
    <location>
        <begin position="177"/>
        <end position="181"/>
    </location>
</feature>
<feature type="transmembrane region" description="Helical; Name=6" evidence="1">
    <location>
        <begin position="182"/>
        <end position="200"/>
    </location>
</feature>
<feature type="topological domain" description="Cytoplasmic" evidence="1">
    <location>
        <begin position="201"/>
        <end position="266"/>
    </location>
</feature>
<feature type="transmembrane region" description="Helical; Name=7" evidence="1">
    <location>
        <begin position="267"/>
        <end position="292"/>
    </location>
</feature>
<feature type="topological domain" description="Extracellular" evidence="1">
    <location>
        <begin position="293"/>
        <end position="300"/>
    </location>
</feature>
<feature type="transmembrane region" description="Helical; Name=8" evidence="1">
    <location>
        <begin position="301"/>
        <end position="323"/>
    </location>
</feature>
<feature type="topological domain" description="Cytoplasmic" evidence="1">
    <location>
        <begin position="324"/>
        <end position="329"/>
    </location>
</feature>
<feature type="transmembrane region" description="Helical; Name=9" evidence="1">
    <location>
        <begin position="330"/>
        <end position="350"/>
    </location>
</feature>
<feature type="topological domain" description="Extracellular" evidence="1">
    <location>
        <begin position="351"/>
        <end position="353"/>
    </location>
</feature>
<feature type="transmembrane region" description="Helical; Name=10" evidence="1">
    <location>
        <begin position="354"/>
        <end position="377"/>
    </location>
</feature>
<feature type="topological domain" description="Cytoplasmic" evidence="1">
    <location>
        <begin position="378"/>
        <end position="391"/>
    </location>
</feature>
<feature type="transmembrane region" description="Helical; Name=11" evidence="1">
    <location>
        <begin position="392"/>
        <end position="415"/>
    </location>
</feature>
<feature type="topological domain" description="Extracellular" evidence="1">
    <location>
        <begin position="416"/>
        <end position="423"/>
    </location>
</feature>
<feature type="transmembrane region" description="Helical; Name=12" evidence="1">
    <location>
        <begin position="424"/>
        <end position="448"/>
    </location>
</feature>
<feature type="topological domain" description="Cytoplasmic" evidence="1">
    <location>
        <begin position="449"/>
        <end position="512"/>
    </location>
</feature>
<feature type="region of interest" description="Required for substrate-binding" evidence="1">
    <location>
        <begin position="400"/>
        <end position="412"/>
    </location>
</feature>
<feature type="region of interest" description="Disordered" evidence="2">
    <location>
        <begin position="478"/>
        <end position="512"/>
    </location>
</feature>
<feature type="binding site" evidence="1">
    <location>
        <position position="48"/>
    </location>
    <ligand>
        <name>folate</name>
        <dbReference type="ChEBI" id="CHEBI:62501"/>
    </ligand>
</feature>
<feature type="binding site" evidence="1">
    <location>
        <position position="49"/>
    </location>
    <ligand>
        <name>folate</name>
        <dbReference type="ChEBI" id="CHEBI:62501"/>
    </ligand>
</feature>
<feature type="binding site" evidence="1">
    <location>
        <position position="121"/>
    </location>
    <ligand>
        <name>folate</name>
        <dbReference type="ChEBI" id="CHEBI:62501"/>
    </ligand>
</feature>
<feature type="binding site" evidence="1">
    <location>
        <position position="131"/>
    </location>
    <ligand>
        <name>folate</name>
        <dbReference type="ChEBI" id="CHEBI:62501"/>
    </ligand>
</feature>
<feature type="binding site" evidence="1">
    <location>
        <position position="162"/>
    </location>
    <ligand>
        <name>folate</name>
        <dbReference type="ChEBI" id="CHEBI:62501"/>
    </ligand>
</feature>
<feature type="binding site" evidence="1">
    <location>
        <position position="281"/>
    </location>
    <ligand>
        <name>folate</name>
        <dbReference type="ChEBI" id="CHEBI:62501"/>
    </ligand>
</feature>
<feature type="binding site" evidence="1">
    <location>
        <position position="282"/>
    </location>
    <ligand>
        <name>folate</name>
        <dbReference type="ChEBI" id="CHEBI:62501"/>
    </ligand>
</feature>
<feature type="binding site" evidence="1">
    <location>
        <position position="286"/>
    </location>
    <ligand>
        <name>folate</name>
        <dbReference type="ChEBI" id="CHEBI:62501"/>
    </ligand>
</feature>
<feature type="binding site" evidence="1">
    <location>
        <position position="366"/>
    </location>
    <ligand>
        <name>folate</name>
        <dbReference type="ChEBI" id="CHEBI:62501"/>
    </ligand>
</feature>
<feature type="binding site" evidence="1">
    <location>
        <position position="370"/>
    </location>
    <ligand>
        <name>folate</name>
        <dbReference type="ChEBI" id="CHEBI:62501"/>
    </ligand>
</feature>
<feature type="modified residue" description="N-acetylmethionine" evidence="1">
    <location>
        <position position="1"/>
    </location>
</feature>
<feature type="modified residue" description="Phosphoserine" evidence="16">
    <location>
        <position position="467"/>
    </location>
</feature>
<feature type="modified residue" description="Phosphoserine" evidence="17">
    <location>
        <position position="472"/>
    </location>
</feature>
<feature type="modified residue" description="Phosphoserine" evidence="16 17">
    <location>
        <position position="477"/>
    </location>
</feature>
<feature type="splice variant" id="VSP_006125" description="In isoform 2." evidence="13">
    <original>WWVFNSSGYYLITYYVHVLWRSTDSSLSYNGAVDAASTLLS</original>
    <variation>C</variation>
    <location>
        <begin position="273"/>
        <end position="313"/>
    </location>
</feature>
<feature type="splice variant" id="VSP_006126" description="In isoform 3." evidence="13">
    <original>FQ</original>
    <variation>PS</variation>
    <location>
        <begin position="378"/>
        <end position="379"/>
    </location>
</feature>
<feature type="splice variant" id="VSP_006127" description="In isoform 3." evidence="13">
    <location>
        <begin position="380"/>
        <end position="512"/>
    </location>
</feature>
<feature type="mutagenesis site" description="Induces resistance to 5,10-dideazatetrahydrofolate; when associated with G-105." evidence="9">
    <original>I</original>
    <variation>F</variation>
    <location>
        <position position="48"/>
    </location>
</feature>
<feature type="mutagenesis site" description="Induces resistance to 5,10-dideazatetrahydrofolate; when associated with F-48." evidence="9">
    <original>W</original>
    <variation>G</variation>
    <location>
        <position position="105"/>
    </location>
</feature>
<keyword id="KW-0007">Acetylation</keyword>
<keyword id="KW-0025">Alternative splicing</keyword>
<keyword id="KW-0050">Antiport</keyword>
<keyword id="KW-1003">Cell membrane</keyword>
<keyword id="KW-0290">Folate-binding</keyword>
<keyword id="KW-0472">Membrane</keyword>
<keyword id="KW-0597">Phosphoprotein</keyword>
<keyword id="KW-1185">Reference proteome</keyword>
<keyword id="KW-0812">Transmembrane</keyword>
<keyword id="KW-1133">Transmembrane helix</keyword>
<keyword id="KW-0813">Transport</keyword>
<evidence type="ECO:0000250" key="1">
    <source>
        <dbReference type="UniProtKB" id="P41440"/>
    </source>
</evidence>
<evidence type="ECO:0000256" key="2">
    <source>
        <dbReference type="SAM" id="MobiDB-lite"/>
    </source>
</evidence>
<evidence type="ECO:0000269" key="3">
    <source>
    </source>
</evidence>
<evidence type="ECO:0000269" key="4">
    <source>
    </source>
</evidence>
<evidence type="ECO:0000269" key="5">
    <source>
    </source>
</evidence>
<evidence type="ECO:0000269" key="6">
    <source>
    </source>
</evidence>
<evidence type="ECO:0000269" key="7">
    <source>
    </source>
</evidence>
<evidence type="ECO:0000269" key="8">
    <source>
    </source>
</evidence>
<evidence type="ECO:0000269" key="9">
    <source>
    </source>
</evidence>
<evidence type="ECO:0000303" key="10">
    <source>
    </source>
</evidence>
<evidence type="ECO:0000303" key="11">
    <source>
    </source>
</evidence>
<evidence type="ECO:0000303" key="12">
    <source>
    </source>
</evidence>
<evidence type="ECO:0000303" key="13">
    <source>
    </source>
</evidence>
<evidence type="ECO:0000305" key="14"/>
<evidence type="ECO:0000312" key="15">
    <source>
        <dbReference type="MGI" id="MGI:103182"/>
    </source>
</evidence>
<evidence type="ECO:0007744" key="16">
    <source>
    </source>
</evidence>
<evidence type="ECO:0007744" key="17">
    <source>
    </source>
</evidence>
<name>S19A1_MOUSE</name>
<comment type="function">
    <text evidence="1 4 5 6 7 8 9">Antiporter that mediates the import of reduced folates, driven by the export of organic anions (PubMed:8276792, PubMed:8664315, PubMed:9111015, PubMed:9748272). Also acts as an importer of immunoreactive cyclic dinucleotides, but with a lower transporter activity (PubMed:31511694, PubMed:36265513). Mechanistically, acts as a secondary active transporter, which exports intracellular organic anions down their concentration gradients to facilitate the uptake of its substrates (By similarity). Has high affinity for N5-methyltetrahydrofolate, the predominant circulating form of folate (PubMed:8276792, PubMed:9111015). Also mediates the import of antifolate drug methotrexate (PubMed:8276792, PubMed:8664315, PubMed:9748272). 5-amino-4-imidazolecarboxamide riboside (AICAR), when phosphorylated to AICAR monophosphate, can serve as an organic anion for antiporter activity (By similarity).</text>
</comment>
<comment type="catalytic activity">
    <reaction evidence="8 9">
        <text>5-amino-1-(5-phospho-beta-D-ribosyl)imidazole-4-carboxamide(in) + (6S)-5-methyl-5,6,7,8-tetrahydrofolate(out) = 5-amino-1-(5-phospho-beta-D-ribosyl)imidazole-4-carboxamide(out) + (6S)-5-methyl-5,6,7,8-tetrahydrofolate(in)</text>
        <dbReference type="Rhea" id="RHEA:60460"/>
        <dbReference type="ChEBI" id="CHEBI:18608"/>
        <dbReference type="ChEBI" id="CHEBI:58475"/>
    </reaction>
    <physiologicalReaction direction="left-to-right" evidence="8 9">
        <dbReference type="Rhea" id="RHEA:60461"/>
    </physiologicalReaction>
</comment>
<comment type="biophysicochemical properties">
    <kinetics>
        <KM evidence="8">1.8 uM for N5-methyltetrahydrofolate (at pH 6.2)</KM>
        <KM evidence="8">2.3 uM for N5-methyltetrahydrofolate (at pH 7.4)</KM>
        <Vmax evidence="8">0.8 pmol/min/mg enzyme with N5-methyltetrahydrofolate as substrate (at pH 6.2)</Vmax>
        <Vmax evidence="8">0.2 pmol/min/mg enzyme with N5-methyltetrahydrofolate as substrate (at pH 7.4)</Vmax>
    </kinetics>
</comment>
<comment type="subcellular location">
    <subcellularLocation>
        <location evidence="3">Cell membrane</location>
        <topology evidence="1">Multi-pass membrane protein</topology>
    </subcellularLocation>
    <subcellularLocation>
        <location evidence="3">Apical cell membrane</location>
        <topology evidence="1">Multi-pass membrane protein</topology>
    </subcellularLocation>
    <subcellularLocation>
        <location evidence="1">Basolateral cell membrane</location>
        <topology evidence="1">Multi-pass membrane protein</topology>
    </subcellularLocation>
</comment>
<comment type="alternative products">
    <event type="alternative splicing"/>
    <isoform>
        <id>P41438-1</id>
        <name>1</name>
        <sequence type="displayed"/>
    </isoform>
    <isoform>
        <id>P41438-2</id>
        <name>2</name>
        <sequence type="described" ref="VSP_006125"/>
    </isoform>
    <isoform>
        <id>P41438-3</id>
        <name>3</name>
        <sequence type="described" ref="VSP_006126 VSP_006127"/>
    </isoform>
</comment>
<comment type="similarity">
    <text evidence="14">Belongs to the reduced folate carrier (RFC) transporter (TC 2.A.48) family.</text>
</comment>
<comment type="caution">
    <text evidence="4 5">It was suggested that in contrast to human, mouse Slc19a1 is not able to transport immunoreactive cyclic dinucleotides, such as cyclic GMP-AMP (2'-3'-cGAMP), an immune messenger produced in response to DNA virus in the cytosol (PubMed:31511694). However, it was also shown to have transporter activity but only at half the level as its human homolog (PubMed:36265513).</text>
</comment>
<organism>
    <name type="scientific">Mus musculus</name>
    <name type="common">Mouse</name>
    <dbReference type="NCBI Taxonomy" id="10090"/>
    <lineage>
        <taxon>Eukaryota</taxon>
        <taxon>Metazoa</taxon>
        <taxon>Chordata</taxon>
        <taxon>Craniata</taxon>
        <taxon>Vertebrata</taxon>
        <taxon>Euteleostomi</taxon>
        <taxon>Mammalia</taxon>
        <taxon>Eutheria</taxon>
        <taxon>Euarchontoglires</taxon>
        <taxon>Glires</taxon>
        <taxon>Rodentia</taxon>
        <taxon>Myomorpha</taxon>
        <taxon>Muroidea</taxon>
        <taxon>Muridae</taxon>
        <taxon>Murinae</taxon>
        <taxon>Mus</taxon>
        <taxon>Mus</taxon>
    </lineage>
</organism>
<accession>P41438</accession>
<accession>Q62450</accession>
<accession>Q62451</accession>
<proteinExistence type="evidence at protein level"/>
<gene>
    <name evidence="15" type="primary">Slc19a1</name>
</gene>
<dbReference type="EMBL" id="L36539">
    <property type="protein sequence ID" value="AAB38483.1"/>
    <property type="molecule type" value="mRNA"/>
</dbReference>
<dbReference type="EMBL" id="L23755">
    <property type="protein sequence ID" value="AAA39738.1"/>
    <property type="molecule type" value="mRNA"/>
</dbReference>
<dbReference type="EMBL" id="U32469">
    <property type="protein sequence ID" value="AAC52258.1"/>
    <property type="molecule type" value="mRNA"/>
</dbReference>
<dbReference type="EMBL" id="U66103">
    <property type="protein sequence ID" value="AAC53287.1"/>
    <property type="molecule type" value="mRNA"/>
</dbReference>
<dbReference type="EMBL" id="U57784">
    <property type="protein sequence ID" value="AAC53288.1"/>
    <property type="molecule type" value="Genomic_DNA"/>
</dbReference>
<dbReference type="EMBL" id="U57781">
    <property type="protein sequence ID" value="AAC53288.1"/>
    <property type="status" value="JOINED"/>
    <property type="molecule type" value="Genomic_DNA"/>
</dbReference>
<dbReference type="EMBL" id="U57782">
    <property type="protein sequence ID" value="AAC53288.1"/>
    <property type="status" value="JOINED"/>
    <property type="molecule type" value="Genomic_DNA"/>
</dbReference>
<dbReference type="EMBL" id="U57783">
    <property type="protein sequence ID" value="AAC53288.1"/>
    <property type="status" value="JOINED"/>
    <property type="molecule type" value="Genomic_DNA"/>
</dbReference>
<dbReference type="EMBL" id="U57785">
    <property type="protein sequence ID" value="AAC53289.1"/>
    <property type="molecule type" value="Genomic_DNA"/>
</dbReference>
<dbReference type="EMBL" id="U57781">
    <property type="protein sequence ID" value="AAC53289.1"/>
    <property type="status" value="JOINED"/>
    <property type="molecule type" value="Genomic_DNA"/>
</dbReference>
<dbReference type="EMBL" id="U57782">
    <property type="protein sequence ID" value="AAC53289.1"/>
    <property type="status" value="JOINED"/>
    <property type="molecule type" value="Genomic_DNA"/>
</dbReference>
<dbReference type="EMBL" id="U57783">
    <property type="protein sequence ID" value="AAC53289.1"/>
    <property type="status" value="JOINED"/>
    <property type="molecule type" value="Genomic_DNA"/>
</dbReference>
<dbReference type="EMBL" id="U57785">
    <property type="protein sequence ID" value="AAC53290.1"/>
    <property type="molecule type" value="Genomic_DNA"/>
</dbReference>
<dbReference type="EMBL" id="U57781">
    <property type="protein sequence ID" value="AAC53290.1"/>
    <property type="status" value="JOINED"/>
    <property type="molecule type" value="Genomic_DNA"/>
</dbReference>
<dbReference type="EMBL" id="U57782">
    <property type="protein sequence ID" value="AAC53290.1"/>
    <property type="status" value="JOINED"/>
    <property type="molecule type" value="Genomic_DNA"/>
</dbReference>
<dbReference type="EMBL" id="U57783">
    <property type="protein sequence ID" value="AAC53290.1"/>
    <property type="status" value="JOINED"/>
    <property type="molecule type" value="Genomic_DNA"/>
</dbReference>
<dbReference type="EMBL" id="U57784">
    <property type="protein sequence ID" value="AAC53290.1"/>
    <property type="status" value="JOINED"/>
    <property type="molecule type" value="Genomic_DNA"/>
</dbReference>
<dbReference type="EMBL" id="U57785">
    <property type="protein sequence ID" value="AAC53291.1"/>
    <property type="molecule type" value="Genomic_DNA"/>
</dbReference>
<dbReference type="EMBL" id="U57781">
    <property type="protein sequence ID" value="AAC53291.1"/>
    <property type="status" value="JOINED"/>
    <property type="molecule type" value="Genomic_DNA"/>
</dbReference>
<dbReference type="EMBL" id="U57782">
    <property type="protein sequence ID" value="AAC53291.1"/>
    <property type="status" value="JOINED"/>
    <property type="molecule type" value="Genomic_DNA"/>
</dbReference>
<dbReference type="EMBL" id="U57783">
    <property type="protein sequence ID" value="AAC53291.1"/>
    <property type="status" value="JOINED"/>
    <property type="molecule type" value="Genomic_DNA"/>
</dbReference>
<dbReference type="EMBL" id="BC015263">
    <property type="protein sequence ID" value="AAH15263.1"/>
    <property type="molecule type" value="mRNA"/>
</dbReference>
<dbReference type="CCDS" id="CCDS35947.1">
    <molecule id="P41438-1"/>
</dbReference>
<dbReference type="PIR" id="A53092">
    <property type="entry name" value="A53092"/>
</dbReference>
<dbReference type="RefSeq" id="NP_001186200.1">
    <molecule id="P41438-1"/>
    <property type="nucleotide sequence ID" value="NM_001199271.2"/>
</dbReference>
<dbReference type="RefSeq" id="NP_001415749.1">
    <molecule id="P41438-1"/>
    <property type="nucleotide sequence ID" value="NM_001428820.1"/>
</dbReference>
<dbReference type="RefSeq" id="NP_001415750.1">
    <molecule id="P41438-1"/>
    <property type="nucleotide sequence ID" value="NM_001428821.1"/>
</dbReference>
<dbReference type="RefSeq" id="NP_112473.1">
    <molecule id="P41438-1"/>
    <property type="nucleotide sequence ID" value="NM_031196.4"/>
</dbReference>
<dbReference type="RefSeq" id="XP_006513477.1">
    <property type="nucleotide sequence ID" value="XM_006513414.3"/>
</dbReference>
<dbReference type="RefSeq" id="XP_006513478.1">
    <property type="nucleotide sequence ID" value="XM_006513415.3"/>
</dbReference>
<dbReference type="RefSeq" id="XP_006513479.1">
    <molecule id="P41438-1"/>
    <property type="nucleotide sequence ID" value="XM_006513416.4"/>
</dbReference>
<dbReference type="RefSeq" id="XP_006513480.1">
    <molecule id="P41438-1"/>
    <property type="nucleotide sequence ID" value="XM_006513417.4"/>
</dbReference>
<dbReference type="RefSeq" id="XP_006513481.1">
    <property type="nucleotide sequence ID" value="XM_006513418.3"/>
</dbReference>
<dbReference type="RefSeq" id="XP_036011606.1">
    <molecule id="P41438-1"/>
    <property type="nucleotide sequence ID" value="XM_036155713.1"/>
</dbReference>
<dbReference type="SMR" id="P41438"/>
<dbReference type="FunCoup" id="P41438">
    <property type="interactions" value="132"/>
</dbReference>
<dbReference type="STRING" id="10090.ENSMUSP00000101050"/>
<dbReference type="GlyGen" id="P41438">
    <property type="glycosylation" value="1 site, 1 N-linked glycan (1 site)"/>
</dbReference>
<dbReference type="iPTMnet" id="P41438"/>
<dbReference type="PhosphoSitePlus" id="P41438"/>
<dbReference type="SwissPalm" id="P41438"/>
<dbReference type="jPOST" id="P41438"/>
<dbReference type="PaxDb" id="10090-ENSMUSP00000101050"/>
<dbReference type="PeptideAtlas" id="P41438"/>
<dbReference type="ProteomicsDB" id="253354">
    <molecule id="P41438-1"/>
</dbReference>
<dbReference type="ProteomicsDB" id="253355">
    <molecule id="P41438-2"/>
</dbReference>
<dbReference type="ProteomicsDB" id="253356">
    <molecule id="P41438-3"/>
</dbReference>
<dbReference type="Antibodypedia" id="10491">
    <property type="antibodies" value="105 antibodies from 21 providers"/>
</dbReference>
<dbReference type="DNASU" id="20509"/>
<dbReference type="Ensembl" id="ENSMUST00000105410.10">
    <molecule id="P41438-1"/>
    <property type="protein sequence ID" value="ENSMUSP00000101050.4"/>
    <property type="gene ID" value="ENSMUSG00000001436.16"/>
</dbReference>
<dbReference type="Ensembl" id="ENSMUST00000144234.8">
    <molecule id="P41438-1"/>
    <property type="protein sequence ID" value="ENSMUSP00000116784.2"/>
    <property type="gene ID" value="ENSMUSG00000001436.16"/>
</dbReference>
<dbReference type="GeneID" id="20509"/>
<dbReference type="KEGG" id="mmu:20509"/>
<dbReference type="UCSC" id="uc007fvc.2">
    <molecule id="P41438-1"/>
    <property type="organism name" value="mouse"/>
</dbReference>
<dbReference type="AGR" id="MGI:103182"/>
<dbReference type="CTD" id="6573"/>
<dbReference type="MGI" id="MGI:103182">
    <property type="gene designation" value="Slc19a1"/>
</dbReference>
<dbReference type="VEuPathDB" id="HostDB:ENSMUSG00000001436"/>
<dbReference type="eggNOG" id="KOG3810">
    <property type="taxonomic scope" value="Eukaryota"/>
</dbReference>
<dbReference type="GeneTree" id="ENSGT00950000183022"/>
<dbReference type="HOGENOM" id="CLU_036909_2_0_1"/>
<dbReference type="InParanoid" id="P41438"/>
<dbReference type="OMA" id="MQFMELF"/>
<dbReference type="OrthoDB" id="18814at2759"/>
<dbReference type="PhylomeDB" id="P41438"/>
<dbReference type="TreeFam" id="TF313684"/>
<dbReference type="Reactome" id="R-MMU-196757">
    <property type="pathway name" value="Metabolism of folate and pterines"/>
</dbReference>
<dbReference type="BioGRID-ORCS" id="20509">
    <property type="hits" value="5 hits in 78 CRISPR screens"/>
</dbReference>
<dbReference type="ChiTaRS" id="Slc19a1">
    <property type="organism name" value="mouse"/>
</dbReference>
<dbReference type="PRO" id="PR:P41438"/>
<dbReference type="Proteomes" id="UP000000589">
    <property type="component" value="Chromosome 10"/>
</dbReference>
<dbReference type="RNAct" id="P41438">
    <property type="molecule type" value="protein"/>
</dbReference>
<dbReference type="Bgee" id="ENSMUSG00000001436">
    <property type="expression patterns" value="Expressed in paneth cell and 275 other cell types or tissues"/>
</dbReference>
<dbReference type="ExpressionAtlas" id="P41438">
    <property type="expression patterns" value="baseline and differential"/>
</dbReference>
<dbReference type="GO" id="GO:0016324">
    <property type="term" value="C:apical plasma membrane"/>
    <property type="evidence" value="ECO:0000314"/>
    <property type="project" value="BHF-UCL"/>
</dbReference>
<dbReference type="GO" id="GO:0016323">
    <property type="term" value="C:basolateral plasma membrane"/>
    <property type="evidence" value="ECO:0007669"/>
    <property type="project" value="UniProtKB-SubCell"/>
</dbReference>
<dbReference type="GO" id="GO:0031526">
    <property type="term" value="C:brush border membrane"/>
    <property type="evidence" value="ECO:0007669"/>
    <property type="project" value="Ensembl"/>
</dbReference>
<dbReference type="GO" id="GO:0061507">
    <property type="term" value="F:2',3'-cyclic GMP-AMP binding"/>
    <property type="evidence" value="ECO:0007669"/>
    <property type="project" value="Ensembl"/>
</dbReference>
<dbReference type="GO" id="GO:0015297">
    <property type="term" value="F:antiporter activity"/>
    <property type="evidence" value="ECO:0000250"/>
    <property type="project" value="UniProtKB"/>
</dbReference>
<dbReference type="GO" id="GO:0008518">
    <property type="term" value="F:folate:monoatomic anion antiporter activity"/>
    <property type="evidence" value="ECO:0000250"/>
    <property type="project" value="UniProtKB"/>
</dbReference>
<dbReference type="GO" id="GO:0005542">
    <property type="term" value="F:folic acid binding"/>
    <property type="evidence" value="ECO:0007669"/>
    <property type="project" value="UniProtKB-KW"/>
</dbReference>
<dbReference type="GO" id="GO:0008517">
    <property type="term" value="F:folic acid transmembrane transporter activity"/>
    <property type="evidence" value="ECO:0000314"/>
    <property type="project" value="UniProtKB"/>
</dbReference>
<dbReference type="GO" id="GO:0015350">
    <property type="term" value="F:methotrexate transmembrane transporter activity"/>
    <property type="evidence" value="ECO:0000314"/>
    <property type="project" value="UniProtKB"/>
</dbReference>
<dbReference type="GO" id="GO:0007565">
    <property type="term" value="P:female pregnancy"/>
    <property type="evidence" value="ECO:0007669"/>
    <property type="project" value="Ensembl"/>
</dbReference>
<dbReference type="GO" id="GO:1904447">
    <property type="term" value="P:folate import across plasma membrane"/>
    <property type="evidence" value="ECO:0000314"/>
    <property type="project" value="UniProtKB"/>
</dbReference>
<dbReference type="GO" id="GO:0098838">
    <property type="term" value="P:folate transmembrane transport"/>
    <property type="evidence" value="ECO:0000314"/>
    <property type="project" value="UniProtKB"/>
</dbReference>
<dbReference type="GO" id="GO:0051958">
    <property type="term" value="P:methotrexate transport"/>
    <property type="evidence" value="ECO:0000314"/>
    <property type="project" value="UniProtKB"/>
</dbReference>
<dbReference type="GO" id="GO:0141111">
    <property type="term" value="P:positive regulation of cGAS/STING signaling pathway"/>
    <property type="evidence" value="ECO:0007669"/>
    <property type="project" value="Ensembl"/>
</dbReference>
<dbReference type="GO" id="GO:0009636">
    <property type="term" value="P:response to toxic substance"/>
    <property type="evidence" value="ECO:0007669"/>
    <property type="project" value="Ensembl"/>
</dbReference>
<dbReference type="GO" id="GO:0009410">
    <property type="term" value="P:response to xenobiotic stimulus"/>
    <property type="evidence" value="ECO:0007669"/>
    <property type="project" value="Ensembl"/>
</dbReference>
<dbReference type="GO" id="GO:0006855">
    <property type="term" value="P:xenobiotic transmembrane transport"/>
    <property type="evidence" value="ECO:0007669"/>
    <property type="project" value="Ensembl"/>
</dbReference>
<dbReference type="FunFam" id="1.20.1250.20:FF:000225">
    <property type="entry name" value="Solute carrier family 19 member 1"/>
    <property type="match status" value="1"/>
</dbReference>
<dbReference type="Gene3D" id="1.20.1250.20">
    <property type="entry name" value="MFS general substrate transporter like domains"/>
    <property type="match status" value="1"/>
</dbReference>
<dbReference type="InterPro" id="IPR002666">
    <property type="entry name" value="Folate_carrier"/>
</dbReference>
<dbReference type="InterPro" id="IPR036259">
    <property type="entry name" value="MFS_trans_sf"/>
</dbReference>
<dbReference type="InterPro" id="IPR028339">
    <property type="entry name" value="SLC19A1"/>
</dbReference>
<dbReference type="NCBIfam" id="TIGR00806">
    <property type="entry name" value="rfc"/>
    <property type="match status" value="1"/>
</dbReference>
<dbReference type="PANTHER" id="PTHR10686">
    <property type="entry name" value="FOLATE TRANSPORTER"/>
    <property type="match status" value="1"/>
</dbReference>
<dbReference type="PANTHER" id="PTHR10686:SF12">
    <property type="entry name" value="REDUCED FOLATE TRANSPORTER"/>
    <property type="match status" value="1"/>
</dbReference>
<dbReference type="Pfam" id="PF01770">
    <property type="entry name" value="Folate_carrier"/>
    <property type="match status" value="1"/>
</dbReference>
<dbReference type="PIRSF" id="PIRSF028739">
    <property type="entry name" value="Folate_carrier"/>
    <property type="match status" value="1"/>
</dbReference>
<dbReference type="PIRSF" id="PIRSF500793">
    <property type="entry name" value="Folate_transporter_1"/>
    <property type="match status" value="1"/>
</dbReference>
<dbReference type="SUPFAM" id="SSF103473">
    <property type="entry name" value="MFS general substrate transporter"/>
    <property type="match status" value="1"/>
</dbReference>
<protein>
    <recommendedName>
        <fullName evidence="14">Reduced folate transporter</fullName>
    </recommendedName>
    <alternativeName>
        <fullName evidence="11">Intestinal folate carrier 1</fullName>
        <shortName evidence="11">IFC-1</shortName>
    </alternativeName>
    <alternativeName>
        <fullName evidence="14">Plasma membrane folate antiporter SLC19A1</fullName>
    </alternativeName>
    <alternativeName>
        <fullName evidence="10">Reduced folate carrier 1</fullName>
        <shortName evidence="10 12">RFC-1</shortName>
        <shortName evidence="10">RFC1</shortName>
    </alternativeName>
    <alternativeName>
        <fullName evidence="14">Solute carrier family 19 member 1</fullName>
    </alternativeName>
</protein>
<reference key="1">
    <citation type="journal article" date="1994" name="J. Biol. Chem.">
        <title>A novel cDNA restores reduced folate carrier activity and methotrexate sensitivity to transport deficient cells.</title>
        <authorList>
            <person name="Dixon K.H."/>
            <person name="Lanpher B.C."/>
            <person name="Chiu J."/>
            <person name="Kelly K."/>
            <person name="Cowan K.H."/>
        </authorList>
    </citation>
    <scope>NUCLEOTIDE SEQUENCE [MRNA]</scope>
    <scope>FUNCTION</scope>
    <source>
        <strain>DBA</strain>
    </source>
</reference>
<reference key="2">
    <citation type="journal article" date="1996" name="Biochim. Biophys. Acta">
        <title>Intestinal folate transport: identification of a cDNA involved in folate transport and the functional expression and distribution of its mRNA.</title>
        <authorList>
            <person name="Said H.M."/>
            <person name="Nguyen T.T."/>
            <person name="Dyer D.L."/>
            <person name="Cowan K.H."/>
            <person name="Rubin S.A."/>
        </authorList>
    </citation>
    <scope>NUCLEOTIDE SEQUENCE [MRNA]</scope>
    <scope>FUNCTION</scope>
    <source>
        <strain>DBA/2J</strain>
        <tissue>Intestine</tissue>
    </source>
</reference>
<reference key="3">
    <citation type="journal article" date="1995" name="J. Biol. Chem.">
        <title>Characterization of a mutation in the reduced folate carrier in a transport defective L1210 murine leukemia cell line.</title>
        <authorList>
            <person name="Brigle K.E."/>
            <person name="Spinella M.J."/>
            <person name="Sierra E.E."/>
            <person name="Goldman I.D."/>
        </authorList>
    </citation>
    <scope>NUCLEOTIDE SEQUENCE [MRNA]</scope>
    <source>
        <strain>DBA/2J</strain>
    </source>
</reference>
<reference key="4">
    <citation type="journal article" date="1997" name="Gene">
        <title>Organization, structure and alternate splicing of the murine RFC-1 gene encoding a folate transporter.</title>
        <authorList>
            <person name="Tolner B.M."/>
            <person name="Roy K."/>
            <person name="Sirotnak F.M."/>
        </authorList>
    </citation>
    <scope>NUCLEOTIDE SEQUENCE [GENOMIC DNA / MRNA] (ISOFORMS 1; 2 AND 3)</scope>
</reference>
<reference key="5">
    <citation type="journal article" date="2004" name="Genome Res.">
        <title>The status, quality, and expansion of the NIH full-length cDNA project: the Mammalian Gene Collection (MGC).</title>
        <authorList>
            <consortium name="The MGC Project Team"/>
        </authorList>
    </citation>
    <scope>NUCLEOTIDE SEQUENCE [LARGE SCALE MRNA] (ISOFORM 1)</scope>
    <source>
        <strain>FVB/N</strain>
        <tissue>Kidney</tissue>
    </source>
</reference>
<reference key="6">
    <citation type="journal article" date="2009" name="Immunity">
        <title>The phagosomal proteome in interferon-gamma-activated macrophages.</title>
        <authorList>
            <person name="Trost M."/>
            <person name="English L."/>
            <person name="Lemieux S."/>
            <person name="Courcelles M."/>
            <person name="Desjardins M."/>
            <person name="Thibault P."/>
        </authorList>
    </citation>
    <scope>PHOSPHORYLATION [LARGE SCALE ANALYSIS] AT SER-467 AND SER-477</scope>
    <scope>IDENTIFICATION BY MASS SPECTROMETRY [LARGE SCALE ANALYSIS]</scope>
</reference>
<reference key="7">
    <citation type="journal article" date="2010" name="Cell">
        <title>A tissue-specific atlas of mouse protein phosphorylation and expression.</title>
        <authorList>
            <person name="Huttlin E.L."/>
            <person name="Jedrychowski M.P."/>
            <person name="Elias J.E."/>
            <person name="Goswami T."/>
            <person name="Rad R."/>
            <person name="Beausoleil S.A."/>
            <person name="Villen J."/>
            <person name="Haas W."/>
            <person name="Sowa M.E."/>
            <person name="Gygi S.P."/>
        </authorList>
    </citation>
    <scope>PHOSPHORYLATION [LARGE SCALE ANALYSIS] AT SER-472 AND SER-477</scope>
    <scope>IDENTIFICATION BY MASS SPECTROMETRY [LARGE SCALE ANALYSIS]</scope>
    <source>
        <tissue>Kidney</tissue>
    </source>
</reference>
<reference key="8">
    <citation type="journal article" date="2000" name="J. Biol. Chem.">
        <title>Expression and differential polarization of the reduced-folate transporter-1 and the folate receptor alpha in mammalian retinal pigment epithelium.</title>
        <authorList>
            <person name="Chancy C.D."/>
            <person name="Kekuda R."/>
            <person name="Huang W."/>
            <person name="Prasad P.D."/>
            <person name="Kuhnel J.M."/>
            <person name="Sirotnak F.M."/>
            <person name="Roon P."/>
            <person name="Ganapathy V."/>
            <person name="Smith S.B."/>
        </authorList>
    </citation>
    <scope>SUBCELLULAR LOCATION</scope>
</reference>
<reference key="9">
    <citation type="journal article" date="1997" name="J. Biol. Chem.">
        <title>RFC-1 gene expression regulates folate absorption in mouse small intestine.</title>
        <authorList>
            <person name="Chiao J.H."/>
            <person name="Roy K."/>
            <person name="Tolner B."/>
            <person name="Yang C.H."/>
            <person name="Sirotnak F.M."/>
        </authorList>
    </citation>
    <scope>FUNCTION</scope>
    <scope>TRANSPORTER ACTIVITY</scope>
    <scope>BIOPHYSICOCHEMICAL PROPERTIES</scope>
</reference>
<reference key="10">
    <citation type="journal article" date="1998" name="J. Biol. Chem.">
        <title>Mutations in the reduced folate carrier gene which confer dominant resistance to 5,10-dideazatetrahydrofolate.</title>
        <authorList>
            <person name="Tse A."/>
            <person name="Brigle K."/>
            <person name="Taylor S.M."/>
            <person name="Moran R.G."/>
        </authorList>
    </citation>
    <scope>FUNCTION</scope>
    <scope>TRANSPORTER ACTIVITY</scope>
    <scope>MUTAGENESIS OF ILE-48 AND TRP-105</scope>
</reference>
<reference key="11">
    <citation type="journal article" date="2019" name="Nature">
        <title>SLC19A1 transports immunoreactive cyclic dinucleotides.</title>
        <authorList>
            <person name="Luteijn R.D."/>
            <person name="Zaver S.A."/>
            <person name="Gowen B.G."/>
            <person name="Wyman S.K."/>
            <person name="Garelis N.E."/>
            <person name="Onia L."/>
            <person name="McWhirter S.M."/>
            <person name="Katibah G.E."/>
            <person name="Corn J.E."/>
            <person name="Woodward J.J."/>
            <person name="Raulet D.H."/>
        </authorList>
    </citation>
    <scope>LACK OF CYCLIC DINUCLEOTIDE TRANSPORTER ACTIVITY</scope>
</reference>
<reference key="12">
    <citation type="journal article" date="2022" name="Nature">
        <title>Recognition of cyclic dinucleotides and folates by human SLC19A1.</title>
        <authorList>
            <person name="Zhang Q."/>
            <person name="Zhang X."/>
            <person name="Zhu Y."/>
            <person name="Sun P."/>
            <person name="Zhang L."/>
            <person name="Ma J."/>
            <person name="Zhang Y."/>
            <person name="Zeng L."/>
            <person name="Nie X."/>
            <person name="Gao Y."/>
            <person name="Li Z."/>
            <person name="Liu S."/>
            <person name="Lou J."/>
            <person name="Gao A."/>
            <person name="Zhang L."/>
            <person name="Gao P."/>
        </authorList>
    </citation>
    <scope>FUNCTION</scope>
    <scope>POSSIBLE TRANSPORTER ACTIVITY</scope>
</reference>
<sequence length="512" mass="58150">MVPTGQVAEKQAYEEPRQDHELKSWRCLVFYLCFFGFMAQLRPGESFITPFLLERKFTKEQVTNEIIPMLPYSHLAVLVPVFLLTDYLRYKPVLVLQCLSFVCVWLLLLLGTSVVHMQLMEVFYSVTMAARIAYSSYIFSLVHPSRYQRMASYSRAAVLLGVFISSVLGQALVTVGHISTYTLNCVSLGFILFSLVLSLFLKRPKRSLFFNRSTLARGALPCELDQMHPGPDRPETRKLDRMLGTCRDSFLVRMLSELVENARQPQLRLWCLWWVFNSSGYYLITYYVHVLWRSTDSSLSYNGAVDAASTLLSAITSFSAGFLSIRWTLWSKLVIAGVIAIQASLVFCMFQIRDIWVCYVTFVLFRGAYQFLVPIATFQIASSLSKELCALVFGINTFLATALKTCITLVVSDKRGLGLQVRDQFRIYFIYFLMLSITCFAWAGLDGLRYCQRGRHQPLAQAQELRSPLETSVQAISLQDGDLRGPQPSAPQLLSEDGMEDDRGDLRVEAKA</sequence>